<dbReference type="EC" id="2.3.1.180" evidence="1"/>
<dbReference type="EMBL" id="BX571857">
    <property type="protein sequence ID" value="CAG42628.1"/>
    <property type="molecule type" value="Genomic_DNA"/>
</dbReference>
<dbReference type="RefSeq" id="WP_001100525.1">
    <property type="nucleotide sequence ID" value="NC_002953.3"/>
</dbReference>
<dbReference type="SMR" id="Q6GAU3"/>
<dbReference type="KEGG" id="sas:SAS0853"/>
<dbReference type="HOGENOM" id="CLU_039592_3_1_9"/>
<dbReference type="UniPathway" id="UPA00094"/>
<dbReference type="GO" id="GO:0005737">
    <property type="term" value="C:cytoplasm"/>
    <property type="evidence" value="ECO:0007669"/>
    <property type="project" value="UniProtKB-SubCell"/>
</dbReference>
<dbReference type="GO" id="GO:0004315">
    <property type="term" value="F:3-oxoacyl-[acyl-carrier-protein] synthase activity"/>
    <property type="evidence" value="ECO:0007669"/>
    <property type="project" value="InterPro"/>
</dbReference>
<dbReference type="GO" id="GO:0033818">
    <property type="term" value="F:beta-ketoacyl-acyl-carrier-protein synthase III activity"/>
    <property type="evidence" value="ECO:0007669"/>
    <property type="project" value="UniProtKB-UniRule"/>
</dbReference>
<dbReference type="GO" id="GO:0006633">
    <property type="term" value="P:fatty acid biosynthetic process"/>
    <property type="evidence" value="ECO:0007669"/>
    <property type="project" value="UniProtKB-UniRule"/>
</dbReference>
<dbReference type="CDD" id="cd00830">
    <property type="entry name" value="KAS_III"/>
    <property type="match status" value="1"/>
</dbReference>
<dbReference type="FunFam" id="3.40.47.10:FF:000004">
    <property type="entry name" value="3-oxoacyl-[acyl-carrier-protein] synthase 3"/>
    <property type="match status" value="1"/>
</dbReference>
<dbReference type="Gene3D" id="3.40.47.10">
    <property type="match status" value="1"/>
</dbReference>
<dbReference type="HAMAP" id="MF_01815">
    <property type="entry name" value="FabH"/>
    <property type="match status" value="1"/>
</dbReference>
<dbReference type="InterPro" id="IPR013747">
    <property type="entry name" value="ACP_syn_III_C"/>
</dbReference>
<dbReference type="InterPro" id="IPR013751">
    <property type="entry name" value="ACP_syn_III_N"/>
</dbReference>
<dbReference type="InterPro" id="IPR004655">
    <property type="entry name" value="FabH"/>
</dbReference>
<dbReference type="InterPro" id="IPR016039">
    <property type="entry name" value="Thiolase-like"/>
</dbReference>
<dbReference type="NCBIfam" id="TIGR00747">
    <property type="entry name" value="fabH"/>
    <property type="match status" value="1"/>
</dbReference>
<dbReference type="NCBIfam" id="NF006829">
    <property type="entry name" value="PRK09352.1"/>
    <property type="match status" value="1"/>
</dbReference>
<dbReference type="PANTHER" id="PTHR43091">
    <property type="entry name" value="3-OXOACYL-[ACYL-CARRIER-PROTEIN] SYNTHASE"/>
    <property type="match status" value="1"/>
</dbReference>
<dbReference type="PANTHER" id="PTHR43091:SF1">
    <property type="entry name" value="BETA-KETOACYL-[ACYL-CARRIER-PROTEIN] SYNTHASE III, CHLOROPLASTIC"/>
    <property type="match status" value="1"/>
</dbReference>
<dbReference type="Pfam" id="PF08545">
    <property type="entry name" value="ACP_syn_III"/>
    <property type="match status" value="1"/>
</dbReference>
<dbReference type="Pfam" id="PF08541">
    <property type="entry name" value="ACP_syn_III_C"/>
    <property type="match status" value="1"/>
</dbReference>
<dbReference type="SUPFAM" id="SSF53901">
    <property type="entry name" value="Thiolase-like"/>
    <property type="match status" value="1"/>
</dbReference>
<organism>
    <name type="scientific">Staphylococcus aureus (strain MSSA476)</name>
    <dbReference type="NCBI Taxonomy" id="282459"/>
    <lineage>
        <taxon>Bacteria</taxon>
        <taxon>Bacillati</taxon>
        <taxon>Bacillota</taxon>
        <taxon>Bacilli</taxon>
        <taxon>Bacillales</taxon>
        <taxon>Staphylococcaceae</taxon>
        <taxon>Staphylococcus</taxon>
    </lineage>
</organism>
<gene>
    <name evidence="1" type="primary">fabH</name>
    <name type="ordered locus">SAS0853</name>
</gene>
<evidence type="ECO:0000255" key="1">
    <source>
        <dbReference type="HAMAP-Rule" id="MF_01815"/>
    </source>
</evidence>
<protein>
    <recommendedName>
        <fullName evidence="1">Beta-ketoacyl-[acyl-carrier-protein] synthase III</fullName>
        <shortName evidence="1">Beta-ketoacyl-ACP synthase III</shortName>
        <shortName evidence="1">KAS III</shortName>
        <ecNumber evidence="1">2.3.1.180</ecNumber>
    </recommendedName>
    <alternativeName>
        <fullName evidence="1">3-oxoacyl-[acyl-carrier-protein] synthase 3</fullName>
    </alternativeName>
    <alternativeName>
        <fullName evidence="1">3-oxoacyl-[acyl-carrier-protein] synthase III</fullName>
    </alternativeName>
</protein>
<proteinExistence type="inferred from homology"/>
<comment type="function">
    <text evidence="1">Catalyzes the condensation reaction of fatty acid synthesis by the addition to an acyl acceptor of two carbons from malonyl-ACP. Catalyzes the first condensation reaction which initiates fatty acid synthesis and may therefore play a role in governing the total rate of fatty acid production. Possesses both acetoacetyl-ACP synthase and acetyl transacylase activities. Its substrate specificity determines the biosynthesis of branched-chain and/or straight-chain of fatty acids.</text>
</comment>
<comment type="catalytic activity">
    <reaction evidence="1">
        <text>malonyl-[ACP] + acetyl-CoA + H(+) = 3-oxobutanoyl-[ACP] + CO2 + CoA</text>
        <dbReference type="Rhea" id="RHEA:12080"/>
        <dbReference type="Rhea" id="RHEA-COMP:9623"/>
        <dbReference type="Rhea" id="RHEA-COMP:9625"/>
        <dbReference type="ChEBI" id="CHEBI:15378"/>
        <dbReference type="ChEBI" id="CHEBI:16526"/>
        <dbReference type="ChEBI" id="CHEBI:57287"/>
        <dbReference type="ChEBI" id="CHEBI:57288"/>
        <dbReference type="ChEBI" id="CHEBI:78449"/>
        <dbReference type="ChEBI" id="CHEBI:78450"/>
        <dbReference type="EC" id="2.3.1.180"/>
    </reaction>
</comment>
<comment type="pathway">
    <text evidence="1">Lipid metabolism; fatty acid biosynthesis.</text>
</comment>
<comment type="subunit">
    <text evidence="1">Homodimer.</text>
</comment>
<comment type="subcellular location">
    <subcellularLocation>
        <location evidence="1">Cytoplasm</location>
    </subcellularLocation>
</comment>
<comment type="domain">
    <text evidence="1">The last Arg residue of the ACP-binding site is essential for the weak association between ACP/AcpP and FabH.</text>
</comment>
<comment type="similarity">
    <text evidence="1">Belongs to the thiolase-like superfamily. FabH family.</text>
</comment>
<sequence length="313" mass="33879">MNVGIKGFGAYAPEKIIDNAYFEQFLDTSDEWISKMTGIKERHWADDDQDTSDLAYEASLKAIADAGIQPEDIDMIIVATATGDMPFPTVANMLQERLGTGKVASMDQLAACSGFMYSMITAKQYVQSGDYHNILVVGADKLSKITDLTDRSTAVLFGDGAGAVIIGEVSDGRGIISYEMGSDGTGGKHLYLDKDTGKLKMNGREVFKFAVRIMGDASTRVVEKANLTSDDIDLFIPHQANIRIMESARERLGISKDKMSVSVNKYGNTSAASIPLSIDQELKNGKIKDDDTIVLVGFGGGLTWGAMTIKWGK</sequence>
<accession>Q6GAU3</accession>
<reference key="1">
    <citation type="journal article" date="2004" name="Proc. Natl. Acad. Sci. U.S.A.">
        <title>Complete genomes of two clinical Staphylococcus aureus strains: evidence for the rapid evolution of virulence and drug resistance.</title>
        <authorList>
            <person name="Holden M.T.G."/>
            <person name="Feil E.J."/>
            <person name="Lindsay J.A."/>
            <person name="Peacock S.J."/>
            <person name="Day N.P.J."/>
            <person name="Enright M.C."/>
            <person name="Foster T.J."/>
            <person name="Moore C.E."/>
            <person name="Hurst L."/>
            <person name="Atkin R."/>
            <person name="Barron A."/>
            <person name="Bason N."/>
            <person name="Bentley S.D."/>
            <person name="Chillingworth C."/>
            <person name="Chillingworth T."/>
            <person name="Churcher C."/>
            <person name="Clark L."/>
            <person name="Corton C."/>
            <person name="Cronin A."/>
            <person name="Doggett J."/>
            <person name="Dowd L."/>
            <person name="Feltwell T."/>
            <person name="Hance Z."/>
            <person name="Harris B."/>
            <person name="Hauser H."/>
            <person name="Holroyd S."/>
            <person name="Jagels K."/>
            <person name="James K.D."/>
            <person name="Lennard N."/>
            <person name="Line A."/>
            <person name="Mayes R."/>
            <person name="Moule S."/>
            <person name="Mungall K."/>
            <person name="Ormond D."/>
            <person name="Quail M.A."/>
            <person name="Rabbinowitsch E."/>
            <person name="Rutherford K.M."/>
            <person name="Sanders M."/>
            <person name="Sharp S."/>
            <person name="Simmonds M."/>
            <person name="Stevens K."/>
            <person name="Whitehead S."/>
            <person name="Barrell B.G."/>
            <person name="Spratt B.G."/>
            <person name="Parkhill J."/>
        </authorList>
    </citation>
    <scope>NUCLEOTIDE SEQUENCE [LARGE SCALE GENOMIC DNA]</scope>
    <source>
        <strain>MSSA476</strain>
    </source>
</reference>
<keyword id="KW-0012">Acyltransferase</keyword>
<keyword id="KW-0963">Cytoplasm</keyword>
<keyword id="KW-0275">Fatty acid biosynthesis</keyword>
<keyword id="KW-0276">Fatty acid metabolism</keyword>
<keyword id="KW-0444">Lipid biosynthesis</keyword>
<keyword id="KW-0443">Lipid metabolism</keyword>
<keyword id="KW-0511">Multifunctional enzyme</keyword>
<keyword id="KW-0808">Transferase</keyword>
<name>FABH_STAAS</name>
<feature type="chain" id="PRO_0000110472" description="Beta-ketoacyl-[acyl-carrier-protein] synthase III">
    <location>
        <begin position="1"/>
        <end position="313"/>
    </location>
</feature>
<feature type="region of interest" description="ACP-binding" evidence="1">
    <location>
        <begin position="239"/>
        <end position="243"/>
    </location>
</feature>
<feature type="active site" evidence="1">
    <location>
        <position position="112"/>
    </location>
</feature>
<feature type="active site" evidence="1">
    <location>
        <position position="238"/>
    </location>
</feature>
<feature type="active site" evidence="1">
    <location>
        <position position="268"/>
    </location>
</feature>